<feature type="chain" id="PRO_1000198411" description="UPF0311 protein Rpal_1987">
    <location>
        <begin position="1"/>
        <end position="153"/>
    </location>
</feature>
<evidence type="ECO:0000255" key="1">
    <source>
        <dbReference type="HAMAP-Rule" id="MF_00775"/>
    </source>
</evidence>
<reference key="1">
    <citation type="submission" date="2008-05" db="EMBL/GenBank/DDBJ databases">
        <title>Complete sequence of Rhodopseudomonas palustris TIE-1.</title>
        <authorList>
            <consortium name="US DOE Joint Genome Institute"/>
            <person name="Lucas S."/>
            <person name="Copeland A."/>
            <person name="Lapidus A."/>
            <person name="Glavina del Rio T."/>
            <person name="Dalin E."/>
            <person name="Tice H."/>
            <person name="Pitluck S."/>
            <person name="Chain P."/>
            <person name="Malfatti S."/>
            <person name="Shin M."/>
            <person name="Vergez L."/>
            <person name="Lang D."/>
            <person name="Schmutz J."/>
            <person name="Larimer F."/>
            <person name="Land M."/>
            <person name="Hauser L."/>
            <person name="Kyrpides N."/>
            <person name="Mikhailova N."/>
            <person name="Emerson D."/>
            <person name="Newman D.K."/>
            <person name="Roden E."/>
            <person name="Richardson P."/>
        </authorList>
    </citation>
    <scope>NUCLEOTIDE SEQUENCE [LARGE SCALE GENOMIC DNA]</scope>
    <source>
        <strain>TIE-1</strain>
    </source>
</reference>
<name>Y1987_RHOPT</name>
<gene>
    <name type="ordered locus">Rpal_1987</name>
</gene>
<sequence length="153" mass="17009">MTPTLETKYVFTITARIGDVTSAGEIGTGVRRIIPILGGEVKGEGISGKVLPFGADFQIIRPNELIELEAKYAFETDDGAVVYVENAGIRFGPVELLQKLKCGEPVDPKLIYFRTRPRFETGHPNYQWLMQHLFIGSAARHADRVVIDVHQVL</sequence>
<accession>B3Q9N8</accession>
<protein>
    <recommendedName>
        <fullName evidence="1">UPF0311 protein Rpal_1987</fullName>
    </recommendedName>
</protein>
<proteinExistence type="inferred from homology"/>
<organism>
    <name type="scientific">Rhodopseudomonas palustris (strain TIE-1)</name>
    <dbReference type="NCBI Taxonomy" id="395960"/>
    <lineage>
        <taxon>Bacteria</taxon>
        <taxon>Pseudomonadati</taxon>
        <taxon>Pseudomonadota</taxon>
        <taxon>Alphaproteobacteria</taxon>
        <taxon>Hyphomicrobiales</taxon>
        <taxon>Nitrobacteraceae</taxon>
        <taxon>Rhodopseudomonas</taxon>
    </lineage>
</organism>
<comment type="similarity">
    <text evidence="1">Belongs to the UPF0311 family.</text>
</comment>
<dbReference type="EMBL" id="CP001096">
    <property type="protein sequence ID" value="ACF00510.1"/>
    <property type="molecule type" value="Genomic_DNA"/>
</dbReference>
<dbReference type="RefSeq" id="WP_012495339.1">
    <property type="nucleotide sequence ID" value="NC_011004.1"/>
</dbReference>
<dbReference type="SMR" id="B3Q9N8"/>
<dbReference type="KEGG" id="rpt:Rpal_1987"/>
<dbReference type="HOGENOM" id="CLU_096872_4_3_5"/>
<dbReference type="OrthoDB" id="5294829at2"/>
<dbReference type="Proteomes" id="UP000001725">
    <property type="component" value="Chromosome"/>
</dbReference>
<dbReference type="Gene3D" id="2.40.160.20">
    <property type="match status" value="1"/>
</dbReference>
<dbReference type="HAMAP" id="MF_00775">
    <property type="entry name" value="UPF0311"/>
    <property type="match status" value="1"/>
</dbReference>
<dbReference type="InterPro" id="IPR020915">
    <property type="entry name" value="UPF0311"/>
</dbReference>
<dbReference type="NCBIfam" id="NF002045">
    <property type="entry name" value="PRK00872.1-1"/>
    <property type="match status" value="1"/>
</dbReference>
<dbReference type="PANTHER" id="PTHR37315">
    <property type="entry name" value="UPF0311 PROTEIN BLR7842"/>
    <property type="match status" value="1"/>
</dbReference>
<dbReference type="PANTHER" id="PTHR37315:SF1">
    <property type="entry name" value="UPF0311 PROTEIN BLR7842"/>
    <property type="match status" value="1"/>
</dbReference>
<dbReference type="Pfam" id="PF11578">
    <property type="entry name" value="DUF3237"/>
    <property type="match status" value="1"/>
</dbReference>